<organism>
    <name type="scientific">Pseudoalteromonas translucida (strain TAC 125)</name>
    <dbReference type="NCBI Taxonomy" id="326442"/>
    <lineage>
        <taxon>Bacteria</taxon>
        <taxon>Pseudomonadati</taxon>
        <taxon>Pseudomonadota</taxon>
        <taxon>Gammaproteobacteria</taxon>
        <taxon>Alteromonadales</taxon>
        <taxon>Pseudoalteromonadaceae</taxon>
        <taxon>Pseudoalteromonas</taxon>
    </lineage>
</organism>
<evidence type="ECO:0000255" key="1">
    <source>
        <dbReference type="HAMAP-Rule" id="MF_00270"/>
    </source>
</evidence>
<evidence type="ECO:0000305" key="2"/>
<reference key="1">
    <citation type="journal article" date="2005" name="Genome Res.">
        <title>Coping with cold: the genome of the versatile marine Antarctica bacterium Pseudoalteromonas haloplanktis TAC125.</title>
        <authorList>
            <person name="Medigue C."/>
            <person name="Krin E."/>
            <person name="Pascal G."/>
            <person name="Barbe V."/>
            <person name="Bernsel A."/>
            <person name="Bertin P.N."/>
            <person name="Cheung F."/>
            <person name="Cruveiller S."/>
            <person name="D'Amico S."/>
            <person name="Duilio A."/>
            <person name="Fang G."/>
            <person name="Feller G."/>
            <person name="Ho C."/>
            <person name="Mangenot S."/>
            <person name="Marino G."/>
            <person name="Nilsson J."/>
            <person name="Parrilli E."/>
            <person name="Rocha E.P.C."/>
            <person name="Rouy Z."/>
            <person name="Sekowska A."/>
            <person name="Tutino M.L."/>
            <person name="Vallenet D."/>
            <person name="von Heijne G."/>
            <person name="Danchin A."/>
        </authorList>
    </citation>
    <scope>NUCLEOTIDE SEQUENCE [LARGE SCALE GENOMIC DNA]</scope>
    <source>
        <strain>TAC 125</strain>
    </source>
</reference>
<accession>Q3II81</accession>
<name>RS18_PSET1</name>
<dbReference type="EMBL" id="CR954246">
    <property type="protein sequence ID" value="CAI87489.1"/>
    <property type="molecule type" value="Genomic_DNA"/>
</dbReference>
<dbReference type="SMR" id="Q3II81"/>
<dbReference type="STRING" id="326442.PSHAa2440"/>
<dbReference type="KEGG" id="pha:PSHAa2440"/>
<dbReference type="eggNOG" id="COG0238">
    <property type="taxonomic scope" value="Bacteria"/>
</dbReference>
<dbReference type="HOGENOM" id="CLU_148710_2_2_6"/>
<dbReference type="BioCyc" id="PHAL326442:PSHA_RS12030-MONOMER"/>
<dbReference type="Proteomes" id="UP000006843">
    <property type="component" value="Chromosome I"/>
</dbReference>
<dbReference type="GO" id="GO:0022627">
    <property type="term" value="C:cytosolic small ribosomal subunit"/>
    <property type="evidence" value="ECO:0007669"/>
    <property type="project" value="TreeGrafter"/>
</dbReference>
<dbReference type="GO" id="GO:0070181">
    <property type="term" value="F:small ribosomal subunit rRNA binding"/>
    <property type="evidence" value="ECO:0007669"/>
    <property type="project" value="TreeGrafter"/>
</dbReference>
<dbReference type="GO" id="GO:0003735">
    <property type="term" value="F:structural constituent of ribosome"/>
    <property type="evidence" value="ECO:0007669"/>
    <property type="project" value="InterPro"/>
</dbReference>
<dbReference type="GO" id="GO:0006412">
    <property type="term" value="P:translation"/>
    <property type="evidence" value="ECO:0007669"/>
    <property type="project" value="UniProtKB-UniRule"/>
</dbReference>
<dbReference type="FunFam" id="4.10.640.10:FF:000001">
    <property type="entry name" value="30S ribosomal protein S18"/>
    <property type="match status" value="1"/>
</dbReference>
<dbReference type="Gene3D" id="4.10.640.10">
    <property type="entry name" value="Ribosomal protein S18"/>
    <property type="match status" value="1"/>
</dbReference>
<dbReference type="HAMAP" id="MF_00270">
    <property type="entry name" value="Ribosomal_bS18"/>
    <property type="match status" value="1"/>
</dbReference>
<dbReference type="InterPro" id="IPR001648">
    <property type="entry name" value="Ribosomal_bS18"/>
</dbReference>
<dbReference type="InterPro" id="IPR018275">
    <property type="entry name" value="Ribosomal_bS18_CS"/>
</dbReference>
<dbReference type="InterPro" id="IPR036870">
    <property type="entry name" value="Ribosomal_bS18_sf"/>
</dbReference>
<dbReference type="NCBIfam" id="TIGR00165">
    <property type="entry name" value="S18"/>
    <property type="match status" value="1"/>
</dbReference>
<dbReference type="PANTHER" id="PTHR13479">
    <property type="entry name" value="30S RIBOSOMAL PROTEIN S18"/>
    <property type="match status" value="1"/>
</dbReference>
<dbReference type="PANTHER" id="PTHR13479:SF40">
    <property type="entry name" value="SMALL RIBOSOMAL SUBUNIT PROTEIN BS18M"/>
    <property type="match status" value="1"/>
</dbReference>
<dbReference type="Pfam" id="PF01084">
    <property type="entry name" value="Ribosomal_S18"/>
    <property type="match status" value="1"/>
</dbReference>
<dbReference type="PRINTS" id="PR00974">
    <property type="entry name" value="RIBOSOMALS18"/>
</dbReference>
<dbReference type="SUPFAM" id="SSF46911">
    <property type="entry name" value="Ribosomal protein S18"/>
    <property type="match status" value="1"/>
</dbReference>
<dbReference type="PROSITE" id="PS00057">
    <property type="entry name" value="RIBOSOMAL_S18"/>
    <property type="match status" value="1"/>
</dbReference>
<feature type="chain" id="PRO_1000003570" description="Small ribosomal subunit protein bS18">
    <location>
        <begin position="1"/>
        <end position="75"/>
    </location>
</feature>
<comment type="function">
    <text evidence="1">Binds as a heterodimer with protein bS6 to the central domain of the 16S rRNA, where it helps stabilize the platform of the 30S subunit.</text>
</comment>
<comment type="subunit">
    <text evidence="1">Part of the 30S ribosomal subunit. Forms a tight heterodimer with protein bS6.</text>
</comment>
<comment type="similarity">
    <text evidence="1">Belongs to the bacterial ribosomal protein bS18 family.</text>
</comment>
<keyword id="KW-1185">Reference proteome</keyword>
<keyword id="KW-0687">Ribonucleoprotein</keyword>
<keyword id="KW-0689">Ribosomal protein</keyword>
<keyword id="KW-0694">RNA-binding</keyword>
<keyword id="KW-0699">rRNA-binding</keyword>
<proteinExistence type="inferred from homology"/>
<protein>
    <recommendedName>
        <fullName evidence="1">Small ribosomal subunit protein bS18</fullName>
    </recommendedName>
    <alternativeName>
        <fullName evidence="2">30S ribosomal protein S18</fullName>
    </alternativeName>
</protein>
<sequence length="75" mass="8843">MARYFRRRKFCRFKAEGVQQIDYKDLATLRNYVTESGKIVPSRITGTSAKYQRQLATAIKRARYLALLPYTDLHK</sequence>
<gene>
    <name evidence="1" type="primary">rpsR</name>
    <name type="ordered locus">PSHAa2440</name>
</gene>